<reference key="1">
    <citation type="journal article" date="2009" name="J. Bacteriol.">
        <title>Complete genome sequence and comparative genome analysis of enteropathogenic Escherichia coli O127:H6 strain E2348/69.</title>
        <authorList>
            <person name="Iguchi A."/>
            <person name="Thomson N.R."/>
            <person name="Ogura Y."/>
            <person name="Saunders D."/>
            <person name="Ooka T."/>
            <person name="Henderson I.R."/>
            <person name="Harris D."/>
            <person name="Asadulghani M."/>
            <person name="Kurokawa K."/>
            <person name="Dean P."/>
            <person name="Kenny B."/>
            <person name="Quail M.A."/>
            <person name="Thurston S."/>
            <person name="Dougan G."/>
            <person name="Hayashi T."/>
            <person name="Parkhill J."/>
            <person name="Frankel G."/>
        </authorList>
    </citation>
    <scope>NUCLEOTIDE SEQUENCE [LARGE SCALE GENOMIC DNA]</scope>
    <source>
        <strain>E2348/69 / EPEC</strain>
    </source>
</reference>
<accession>B7UL72</accession>
<keyword id="KW-0963">Cytoplasm</keyword>
<keyword id="KW-0326">Glycosidase</keyword>
<keyword id="KW-0378">Hydrolase</keyword>
<keyword id="KW-1185">Reference proteome</keyword>
<organism>
    <name type="scientific">Escherichia coli O127:H6 (strain E2348/69 / EPEC)</name>
    <dbReference type="NCBI Taxonomy" id="574521"/>
    <lineage>
        <taxon>Bacteria</taxon>
        <taxon>Pseudomonadati</taxon>
        <taxon>Pseudomonadota</taxon>
        <taxon>Gammaproteobacteria</taxon>
        <taxon>Enterobacterales</taxon>
        <taxon>Enterobacteriaceae</taxon>
        <taxon>Escherichia</taxon>
    </lineage>
</organism>
<dbReference type="EC" id="3.2.1.28" evidence="1"/>
<dbReference type="EMBL" id="FM180568">
    <property type="protein sequence ID" value="CAS11309.1"/>
    <property type="molecule type" value="Genomic_DNA"/>
</dbReference>
<dbReference type="RefSeq" id="WP_000934214.1">
    <property type="nucleotide sequence ID" value="NC_011601.1"/>
</dbReference>
<dbReference type="SMR" id="B7UL72"/>
<dbReference type="CAZy" id="GH37">
    <property type="family name" value="Glycoside Hydrolase Family 37"/>
</dbReference>
<dbReference type="KEGG" id="ecg:E2348C_3761"/>
<dbReference type="HOGENOM" id="CLU_006451_3_1_6"/>
<dbReference type="UniPathway" id="UPA00300">
    <property type="reaction ID" value="UER00535"/>
</dbReference>
<dbReference type="Proteomes" id="UP000008205">
    <property type="component" value="Chromosome"/>
</dbReference>
<dbReference type="GO" id="GO:0005737">
    <property type="term" value="C:cytoplasm"/>
    <property type="evidence" value="ECO:0007669"/>
    <property type="project" value="UniProtKB-SubCell"/>
</dbReference>
<dbReference type="GO" id="GO:0004555">
    <property type="term" value="F:alpha,alpha-trehalase activity"/>
    <property type="evidence" value="ECO:0007669"/>
    <property type="project" value="UniProtKB-UniRule"/>
</dbReference>
<dbReference type="GO" id="GO:0071474">
    <property type="term" value="P:cellular hyperosmotic response"/>
    <property type="evidence" value="ECO:0007669"/>
    <property type="project" value="InterPro"/>
</dbReference>
<dbReference type="GO" id="GO:0005993">
    <property type="term" value="P:trehalose catabolic process"/>
    <property type="evidence" value="ECO:0007669"/>
    <property type="project" value="UniProtKB-UniRule"/>
</dbReference>
<dbReference type="FunFam" id="1.50.10.10:FF:000003">
    <property type="entry name" value="Cytoplasmic trehalase"/>
    <property type="match status" value="1"/>
</dbReference>
<dbReference type="Gene3D" id="1.50.10.10">
    <property type="match status" value="1"/>
</dbReference>
<dbReference type="HAMAP" id="MF_01059">
    <property type="entry name" value="Cyt_trehalase"/>
    <property type="match status" value="1"/>
</dbReference>
<dbReference type="InterPro" id="IPR008928">
    <property type="entry name" value="6-hairpin_glycosidase_sf"/>
</dbReference>
<dbReference type="InterPro" id="IPR012341">
    <property type="entry name" value="6hp_glycosidase-like_sf"/>
</dbReference>
<dbReference type="InterPro" id="IPR023715">
    <property type="entry name" value="Cyt_trehalase"/>
</dbReference>
<dbReference type="InterPro" id="IPR001661">
    <property type="entry name" value="Glyco_hydro_37"/>
</dbReference>
<dbReference type="InterPro" id="IPR018232">
    <property type="entry name" value="Glyco_hydro_37_CS"/>
</dbReference>
<dbReference type="NCBIfam" id="NF009773">
    <property type="entry name" value="PRK13270.1"/>
    <property type="match status" value="1"/>
</dbReference>
<dbReference type="NCBIfam" id="NF009774">
    <property type="entry name" value="PRK13271.1"/>
    <property type="match status" value="1"/>
</dbReference>
<dbReference type="PANTHER" id="PTHR23403:SF8">
    <property type="entry name" value="CYTOPLASMIC TREHALASE"/>
    <property type="match status" value="1"/>
</dbReference>
<dbReference type="PANTHER" id="PTHR23403">
    <property type="entry name" value="TREHALASE"/>
    <property type="match status" value="1"/>
</dbReference>
<dbReference type="Pfam" id="PF01204">
    <property type="entry name" value="Trehalase"/>
    <property type="match status" value="1"/>
</dbReference>
<dbReference type="PRINTS" id="PR00744">
    <property type="entry name" value="GLHYDRLASE37"/>
</dbReference>
<dbReference type="SUPFAM" id="SSF48208">
    <property type="entry name" value="Six-hairpin glycosidases"/>
    <property type="match status" value="1"/>
</dbReference>
<dbReference type="PROSITE" id="PS00927">
    <property type="entry name" value="TREHALASE_1"/>
    <property type="match status" value="1"/>
</dbReference>
<dbReference type="PROSITE" id="PS00928">
    <property type="entry name" value="TREHALASE_2"/>
    <property type="match status" value="1"/>
</dbReference>
<evidence type="ECO:0000255" key="1">
    <source>
        <dbReference type="HAMAP-Rule" id="MF_01059"/>
    </source>
</evidence>
<comment type="function">
    <text evidence="1">Hydrolyzes trehalose to glucose. Could be involved, in cells returning to low osmolarity conditions, in the utilization of the accumulated cytoplasmic trehalose, which was synthesized in response to high osmolarity.</text>
</comment>
<comment type="catalytic activity">
    <reaction evidence="1">
        <text>alpha,alpha-trehalose + H2O = alpha-D-glucose + beta-D-glucose</text>
        <dbReference type="Rhea" id="RHEA:32675"/>
        <dbReference type="ChEBI" id="CHEBI:15377"/>
        <dbReference type="ChEBI" id="CHEBI:15903"/>
        <dbReference type="ChEBI" id="CHEBI:16551"/>
        <dbReference type="ChEBI" id="CHEBI:17925"/>
        <dbReference type="EC" id="3.2.1.28"/>
    </reaction>
</comment>
<comment type="pathway">
    <text evidence="1">Glycan degradation; trehalose degradation; D-glucose from alpha,alpha-trehalose: step 1/1.</text>
</comment>
<comment type="subunit">
    <text evidence="1">Monomer.</text>
</comment>
<comment type="subcellular location">
    <subcellularLocation>
        <location evidence="1">Cytoplasm</location>
    </subcellularLocation>
</comment>
<comment type="similarity">
    <text evidence="1">Belongs to the glycosyl hydrolase 37 family.</text>
</comment>
<gene>
    <name evidence="1" type="primary">treF</name>
    <name type="ordered locus">E2348C_3761</name>
</gene>
<name>TREF_ECO27</name>
<feature type="chain" id="PRO_1000149679" description="Cytoplasmic trehalase">
    <location>
        <begin position="1"/>
        <end position="549"/>
    </location>
</feature>
<feature type="active site" description="Proton donor/acceptor" evidence="1">
    <location>
        <position position="326"/>
    </location>
</feature>
<feature type="active site" description="Proton donor/acceptor" evidence="1">
    <location>
        <position position="509"/>
    </location>
</feature>
<feature type="binding site" evidence="1">
    <location>
        <position position="168"/>
    </location>
    <ligand>
        <name>substrate</name>
    </ligand>
</feature>
<feature type="binding site" evidence="1">
    <location>
        <begin position="175"/>
        <end position="176"/>
    </location>
    <ligand>
        <name>substrate</name>
    </ligand>
</feature>
<feature type="binding site" evidence="1">
    <location>
        <position position="212"/>
    </location>
    <ligand>
        <name>substrate</name>
    </ligand>
</feature>
<feature type="binding site" evidence="1">
    <location>
        <begin position="221"/>
        <end position="223"/>
    </location>
    <ligand>
        <name>substrate</name>
    </ligand>
</feature>
<feature type="binding site" evidence="1">
    <location>
        <begin position="292"/>
        <end position="294"/>
    </location>
    <ligand>
        <name>substrate</name>
    </ligand>
</feature>
<feature type="binding site" evidence="1">
    <location>
        <position position="324"/>
    </location>
    <ligand>
        <name>substrate</name>
    </ligand>
</feature>
<feature type="binding site" evidence="1">
    <location>
        <position position="525"/>
    </location>
    <ligand>
        <name>substrate</name>
    </ligand>
</feature>
<proteinExistence type="inferred from homology"/>
<sequence>MLNQKIQNPNPDELMIEVDLCYELDPYELKLDEMIEAEPEPEMIEGLPASDALTPADRYLELFEHVQSAKIFPDSKTFPDCAPKMDPLDILIRYRKVRRHRDFDLRKFVENHFWLPEVYSSEYVSDPQNSLKEHIDQLWPVLTREPQDHIPWSSLLALPQSYIVPGGRFSETYYWDSYFTMLGLAESGREDLLKCMADNFAWMIENYGHIPNGNRTYYLSRSQPPVFALMVELFEEDGVRGARRYLDHLKMEYAFWMDGAESLIPNQAYRHVVRMPDGSLLNRYWDDRDTPRDESWLEDVETAKHSGRPPNEVYRDLRAGAASGWDYSSRWLRDTGRLASIRTTQFIPIDLNAFLFKLESAIANISALKGEKETEALFRQKASARRDAVNRYLWDDENGIYRDYDWRREQLALFSAAAIVPLYVGMANHEQADRLANAVRSRLLTPGGILASEYETGEQWDKPNGWAPLQWMAIQGFKMYGDDLLGDEIARNWLKTVNQFYLEQHKLIEKYHIADGVPREGGGGEYPLQDGFGWTNGVVRRLIGLYGEP</sequence>
<protein>
    <recommendedName>
        <fullName evidence="1">Cytoplasmic trehalase</fullName>
        <ecNumber evidence="1">3.2.1.28</ecNumber>
    </recommendedName>
    <alternativeName>
        <fullName evidence="1">Alpha,alpha-trehalase</fullName>
    </alternativeName>
    <alternativeName>
        <fullName evidence="1">Alpha,alpha-trehalose glucohydrolase</fullName>
    </alternativeName>
</protein>